<gene>
    <name type="primary">lifO</name>
    <name type="synonym">lipB</name>
    <name type="ordered locus">XF_1182</name>
</gene>
<dbReference type="EMBL" id="AE003849">
    <property type="protein sequence ID" value="AAF83992.1"/>
    <property type="molecule type" value="Genomic_DNA"/>
</dbReference>
<dbReference type="PIR" id="B82713">
    <property type="entry name" value="B82713"/>
</dbReference>
<dbReference type="RefSeq" id="WP_010893694.1">
    <property type="nucleotide sequence ID" value="NC_002488.3"/>
</dbReference>
<dbReference type="SMR" id="Q9PE46"/>
<dbReference type="STRING" id="160492.XF_1182"/>
<dbReference type="KEGG" id="xfa:XF_1182"/>
<dbReference type="eggNOG" id="COG5380">
    <property type="taxonomic scope" value="Bacteria"/>
</dbReference>
<dbReference type="HOGENOM" id="CLU_064928_1_0_6"/>
<dbReference type="Proteomes" id="UP000000812">
    <property type="component" value="Chromosome"/>
</dbReference>
<dbReference type="GO" id="GO:0005886">
    <property type="term" value="C:plasma membrane"/>
    <property type="evidence" value="ECO:0007669"/>
    <property type="project" value="UniProtKB-SubCell"/>
</dbReference>
<dbReference type="GO" id="GO:0051082">
    <property type="term" value="F:unfolded protein binding"/>
    <property type="evidence" value="ECO:0007669"/>
    <property type="project" value="UniProtKB-UniRule"/>
</dbReference>
<dbReference type="GO" id="GO:0016042">
    <property type="term" value="P:lipid catabolic process"/>
    <property type="evidence" value="ECO:0007669"/>
    <property type="project" value="UniProtKB-UniRule"/>
</dbReference>
<dbReference type="GO" id="GO:0006457">
    <property type="term" value="P:protein folding"/>
    <property type="evidence" value="ECO:0007669"/>
    <property type="project" value="UniProtKB-UniRule"/>
</dbReference>
<dbReference type="HAMAP" id="MF_00790">
    <property type="entry name" value="Lipase_chap"/>
    <property type="match status" value="1"/>
</dbReference>
<dbReference type="InterPro" id="IPR004961">
    <property type="entry name" value="Lipase_chaperone"/>
</dbReference>
<dbReference type="NCBIfam" id="NF002338">
    <property type="entry name" value="PRK01294.1-6"/>
    <property type="match status" value="1"/>
</dbReference>
<dbReference type="Pfam" id="PF03280">
    <property type="entry name" value="Lipase_chap"/>
    <property type="match status" value="1"/>
</dbReference>
<dbReference type="SUPFAM" id="SSF158855">
    <property type="entry name" value="Lipase chaperone-like"/>
    <property type="match status" value="1"/>
</dbReference>
<protein>
    <recommendedName>
        <fullName>Lipase chaperone</fullName>
    </recommendedName>
    <alternativeName>
        <fullName>Lipase activator protein</fullName>
    </alternativeName>
    <alternativeName>
        <fullName>Lipase foldase</fullName>
    </alternativeName>
    <alternativeName>
        <fullName>Lipase helper protein</fullName>
    </alternativeName>
    <alternativeName>
        <fullName>Lipase modulator</fullName>
    </alternativeName>
</protein>
<comment type="function">
    <text evidence="1">May be involved in the folding of the extracellular lipase during its passage through the periplasm.</text>
</comment>
<comment type="subcellular location">
    <subcellularLocation>
        <location evidence="1">Cell inner membrane</location>
        <topology evidence="1">Single-pass membrane protein</topology>
        <orientation evidence="1">Periplasmic side</orientation>
    </subcellularLocation>
</comment>
<comment type="similarity">
    <text evidence="3">Belongs to the lipase chaperone family.</text>
</comment>
<evidence type="ECO:0000250" key="1"/>
<evidence type="ECO:0000255" key="2"/>
<evidence type="ECO:0000305" key="3"/>
<sequence length="350" mass="39700">MIKKYSFVNHRIVLYLILGCVVVCGVWYSFDVRQAIDVGAVDLSLPRMSNNLLKEVAVGEGKTTNRLSRLPVDSTVPTVLPQSLAGSIAPPLPLDAYGHLARVSAVRDFFDYFLTAQNDLTPAALDELVTHEIVKQLHGTSAQVEAQDVWTRYCAYFSQLVKLPDLGMVLGDKLDFVAVQRALDQRASLAVRTLGDWSEPFFGAEQQRQRYDLERLKIADDQALTDEQKKKRLVALEQKLPSKVQEERIKIQQQQDAVVKIIQLQKDEVTPDGIRLQVVGLLGPEVAYRVAEMRRQDEIWQEKYKHYAAQRVQIEAQQLEPKEHDVQVENLRQRIFTKPGEALRAASLDQ</sequence>
<organism>
    <name type="scientific">Xylella fastidiosa (strain 9a5c)</name>
    <dbReference type="NCBI Taxonomy" id="160492"/>
    <lineage>
        <taxon>Bacteria</taxon>
        <taxon>Pseudomonadati</taxon>
        <taxon>Pseudomonadota</taxon>
        <taxon>Gammaproteobacteria</taxon>
        <taxon>Lysobacterales</taxon>
        <taxon>Lysobacteraceae</taxon>
        <taxon>Xylella</taxon>
    </lineage>
</organism>
<proteinExistence type="inferred from homology"/>
<accession>Q9PE46</accession>
<name>LIFO_XYLFA</name>
<keyword id="KW-0997">Cell inner membrane</keyword>
<keyword id="KW-1003">Cell membrane</keyword>
<keyword id="KW-0143">Chaperone</keyword>
<keyword id="KW-0442">Lipid degradation</keyword>
<keyword id="KW-0443">Lipid metabolism</keyword>
<keyword id="KW-0472">Membrane</keyword>
<keyword id="KW-0812">Transmembrane</keyword>
<keyword id="KW-1133">Transmembrane helix</keyword>
<feature type="chain" id="PRO_0000218490" description="Lipase chaperone">
    <location>
        <begin position="1"/>
        <end position="350"/>
    </location>
</feature>
<feature type="transmembrane region" description="Helical" evidence="2">
    <location>
        <begin position="12"/>
        <end position="32"/>
    </location>
</feature>
<reference key="1">
    <citation type="journal article" date="2000" name="Nature">
        <title>The genome sequence of the plant pathogen Xylella fastidiosa.</title>
        <authorList>
            <person name="Simpson A.J.G."/>
            <person name="Reinach F.C."/>
            <person name="Arruda P."/>
            <person name="Abreu F.A."/>
            <person name="Acencio M."/>
            <person name="Alvarenga R."/>
            <person name="Alves L.M.C."/>
            <person name="Araya J.E."/>
            <person name="Baia G.S."/>
            <person name="Baptista C.S."/>
            <person name="Barros M.H."/>
            <person name="Bonaccorsi E.D."/>
            <person name="Bordin S."/>
            <person name="Bove J.M."/>
            <person name="Briones M.R.S."/>
            <person name="Bueno M.R.P."/>
            <person name="Camargo A.A."/>
            <person name="Camargo L.E.A."/>
            <person name="Carraro D.M."/>
            <person name="Carrer H."/>
            <person name="Colauto N.B."/>
            <person name="Colombo C."/>
            <person name="Costa F.F."/>
            <person name="Costa M.C.R."/>
            <person name="Costa-Neto C.M."/>
            <person name="Coutinho L.L."/>
            <person name="Cristofani M."/>
            <person name="Dias-Neto E."/>
            <person name="Docena C."/>
            <person name="El-Dorry H."/>
            <person name="Facincani A.P."/>
            <person name="Ferreira A.J.S."/>
            <person name="Ferreira V.C.A."/>
            <person name="Ferro J.A."/>
            <person name="Fraga J.S."/>
            <person name="Franca S.C."/>
            <person name="Franco M.C."/>
            <person name="Frohme M."/>
            <person name="Furlan L.R."/>
            <person name="Garnier M."/>
            <person name="Goldman G.H."/>
            <person name="Goldman M.H.S."/>
            <person name="Gomes S.L."/>
            <person name="Gruber A."/>
            <person name="Ho P.L."/>
            <person name="Hoheisel J.D."/>
            <person name="Junqueira M.L."/>
            <person name="Kemper E.L."/>
            <person name="Kitajima J.P."/>
            <person name="Krieger J.E."/>
            <person name="Kuramae E.E."/>
            <person name="Laigret F."/>
            <person name="Lambais M.R."/>
            <person name="Leite L.C.C."/>
            <person name="Lemos E.G.M."/>
            <person name="Lemos M.V.F."/>
            <person name="Lopes S.A."/>
            <person name="Lopes C.R."/>
            <person name="Machado J.A."/>
            <person name="Machado M.A."/>
            <person name="Madeira A.M.B.N."/>
            <person name="Madeira H.M.F."/>
            <person name="Marino C.L."/>
            <person name="Marques M.V."/>
            <person name="Martins E.A.L."/>
            <person name="Martins E.M.F."/>
            <person name="Matsukuma A.Y."/>
            <person name="Menck C.F.M."/>
            <person name="Miracca E.C."/>
            <person name="Miyaki C.Y."/>
            <person name="Monteiro-Vitorello C.B."/>
            <person name="Moon D.H."/>
            <person name="Nagai M.A."/>
            <person name="Nascimento A.L.T.O."/>
            <person name="Netto L.E.S."/>
            <person name="Nhani A. Jr."/>
            <person name="Nobrega F.G."/>
            <person name="Nunes L.R."/>
            <person name="Oliveira M.A."/>
            <person name="de Oliveira M.C."/>
            <person name="de Oliveira R.C."/>
            <person name="Palmieri D.A."/>
            <person name="Paris A."/>
            <person name="Peixoto B.R."/>
            <person name="Pereira G.A.G."/>
            <person name="Pereira H.A. Jr."/>
            <person name="Pesquero J.B."/>
            <person name="Quaggio R.B."/>
            <person name="Roberto P.G."/>
            <person name="Rodrigues V."/>
            <person name="de Rosa A.J.M."/>
            <person name="de Rosa V.E. Jr."/>
            <person name="de Sa R.G."/>
            <person name="Santelli R.V."/>
            <person name="Sawasaki H.E."/>
            <person name="da Silva A.C.R."/>
            <person name="da Silva A.M."/>
            <person name="da Silva F.R."/>
            <person name="Silva W.A. Jr."/>
            <person name="da Silveira J.F."/>
            <person name="Silvestri M.L.Z."/>
            <person name="Siqueira W.J."/>
            <person name="de Souza A.A."/>
            <person name="de Souza A.P."/>
            <person name="Terenzi M.F."/>
            <person name="Truffi D."/>
            <person name="Tsai S.M."/>
            <person name="Tsuhako M.H."/>
            <person name="Vallada H."/>
            <person name="Van Sluys M.A."/>
            <person name="Verjovski-Almeida S."/>
            <person name="Vettore A.L."/>
            <person name="Zago M.A."/>
            <person name="Zatz M."/>
            <person name="Meidanis J."/>
            <person name="Setubal J.C."/>
        </authorList>
    </citation>
    <scope>NUCLEOTIDE SEQUENCE [LARGE SCALE GENOMIC DNA]</scope>
    <source>
        <strain>9a5c</strain>
    </source>
</reference>